<evidence type="ECO:0000255" key="1">
    <source>
        <dbReference type="HAMAP-Rule" id="MF_00156"/>
    </source>
</evidence>
<reference key="1">
    <citation type="submission" date="2009-01" db="EMBL/GenBank/DDBJ databases">
        <title>Complete sequence of chromosome of Caldicellulosiruptor becscii DSM 6725.</title>
        <authorList>
            <person name="Lucas S."/>
            <person name="Copeland A."/>
            <person name="Lapidus A."/>
            <person name="Glavina del Rio T."/>
            <person name="Tice H."/>
            <person name="Bruce D."/>
            <person name="Goodwin L."/>
            <person name="Pitluck S."/>
            <person name="Sims D."/>
            <person name="Meincke L."/>
            <person name="Brettin T."/>
            <person name="Detter J.C."/>
            <person name="Han C."/>
            <person name="Larimer F."/>
            <person name="Land M."/>
            <person name="Hauser L."/>
            <person name="Kyrpides N."/>
            <person name="Ovchinnikova G."/>
            <person name="Kataeva I."/>
            <person name="Adams M.W.W."/>
        </authorList>
    </citation>
    <scope>NUCLEOTIDE SEQUENCE [LARGE SCALE GENOMIC DNA]</scope>
    <source>
        <strain>ATCC BAA-1888 / DSM 6725 / KCTC 15123 / Z-1320</strain>
    </source>
</reference>
<dbReference type="EC" id="2.1.2.11" evidence="1"/>
<dbReference type="EMBL" id="CP001393">
    <property type="protein sequence ID" value="ACM61068.1"/>
    <property type="molecule type" value="Genomic_DNA"/>
</dbReference>
<dbReference type="RefSeq" id="WP_015908353.1">
    <property type="nucleotide sequence ID" value="NC_012034.1"/>
</dbReference>
<dbReference type="SMR" id="B9ML78"/>
<dbReference type="STRING" id="521460.Athe_1981"/>
<dbReference type="GeneID" id="31773333"/>
<dbReference type="KEGG" id="ate:Athe_1981"/>
<dbReference type="eggNOG" id="COG0413">
    <property type="taxonomic scope" value="Bacteria"/>
</dbReference>
<dbReference type="HOGENOM" id="CLU_036645_1_0_9"/>
<dbReference type="UniPathway" id="UPA00028">
    <property type="reaction ID" value="UER00003"/>
</dbReference>
<dbReference type="Proteomes" id="UP000007723">
    <property type="component" value="Chromosome"/>
</dbReference>
<dbReference type="GO" id="GO:0005737">
    <property type="term" value="C:cytoplasm"/>
    <property type="evidence" value="ECO:0007669"/>
    <property type="project" value="UniProtKB-SubCell"/>
</dbReference>
<dbReference type="GO" id="GO:0003864">
    <property type="term" value="F:3-methyl-2-oxobutanoate hydroxymethyltransferase activity"/>
    <property type="evidence" value="ECO:0007669"/>
    <property type="project" value="UniProtKB-UniRule"/>
</dbReference>
<dbReference type="GO" id="GO:0000287">
    <property type="term" value="F:magnesium ion binding"/>
    <property type="evidence" value="ECO:0007669"/>
    <property type="project" value="TreeGrafter"/>
</dbReference>
<dbReference type="GO" id="GO:0015940">
    <property type="term" value="P:pantothenate biosynthetic process"/>
    <property type="evidence" value="ECO:0007669"/>
    <property type="project" value="UniProtKB-UniRule"/>
</dbReference>
<dbReference type="CDD" id="cd06557">
    <property type="entry name" value="KPHMT-like"/>
    <property type="match status" value="1"/>
</dbReference>
<dbReference type="FunFam" id="3.20.20.60:FF:000003">
    <property type="entry name" value="3-methyl-2-oxobutanoate hydroxymethyltransferase"/>
    <property type="match status" value="1"/>
</dbReference>
<dbReference type="Gene3D" id="3.20.20.60">
    <property type="entry name" value="Phosphoenolpyruvate-binding domains"/>
    <property type="match status" value="1"/>
</dbReference>
<dbReference type="HAMAP" id="MF_00156">
    <property type="entry name" value="PanB"/>
    <property type="match status" value="1"/>
</dbReference>
<dbReference type="InterPro" id="IPR003700">
    <property type="entry name" value="Pantoate_hydroxy_MeTrfase"/>
</dbReference>
<dbReference type="InterPro" id="IPR015813">
    <property type="entry name" value="Pyrv/PenolPyrv_kinase-like_dom"/>
</dbReference>
<dbReference type="InterPro" id="IPR040442">
    <property type="entry name" value="Pyrv_kinase-like_dom_sf"/>
</dbReference>
<dbReference type="NCBIfam" id="TIGR00222">
    <property type="entry name" value="panB"/>
    <property type="match status" value="1"/>
</dbReference>
<dbReference type="NCBIfam" id="NF001452">
    <property type="entry name" value="PRK00311.1"/>
    <property type="match status" value="1"/>
</dbReference>
<dbReference type="PANTHER" id="PTHR20881">
    <property type="entry name" value="3-METHYL-2-OXOBUTANOATE HYDROXYMETHYLTRANSFERASE"/>
    <property type="match status" value="1"/>
</dbReference>
<dbReference type="PANTHER" id="PTHR20881:SF0">
    <property type="entry name" value="3-METHYL-2-OXOBUTANOATE HYDROXYMETHYLTRANSFERASE"/>
    <property type="match status" value="1"/>
</dbReference>
<dbReference type="Pfam" id="PF02548">
    <property type="entry name" value="Pantoate_transf"/>
    <property type="match status" value="1"/>
</dbReference>
<dbReference type="PIRSF" id="PIRSF000388">
    <property type="entry name" value="Pantoate_hydroxy_MeTrfase"/>
    <property type="match status" value="1"/>
</dbReference>
<dbReference type="SUPFAM" id="SSF51621">
    <property type="entry name" value="Phosphoenolpyruvate/pyruvate domain"/>
    <property type="match status" value="1"/>
</dbReference>
<protein>
    <recommendedName>
        <fullName evidence="1">3-methyl-2-oxobutanoate hydroxymethyltransferase</fullName>
        <ecNumber evidence="1">2.1.2.11</ecNumber>
    </recommendedName>
    <alternativeName>
        <fullName evidence="1">Ketopantoate hydroxymethyltransferase</fullName>
        <shortName evidence="1">KPHMT</shortName>
    </alternativeName>
</protein>
<accession>B9ML78</accession>
<comment type="function">
    <text evidence="1">Catalyzes the reversible reaction in which hydroxymethyl group from 5,10-methylenetetrahydrofolate is transferred onto alpha-ketoisovalerate to form ketopantoate.</text>
</comment>
<comment type="catalytic activity">
    <reaction evidence="1">
        <text>3-methyl-2-oxobutanoate + (6R)-5,10-methylene-5,6,7,8-tetrahydrofolate + H2O = 2-dehydropantoate + (6S)-5,6,7,8-tetrahydrofolate</text>
        <dbReference type="Rhea" id="RHEA:11824"/>
        <dbReference type="ChEBI" id="CHEBI:11561"/>
        <dbReference type="ChEBI" id="CHEBI:11851"/>
        <dbReference type="ChEBI" id="CHEBI:15377"/>
        <dbReference type="ChEBI" id="CHEBI:15636"/>
        <dbReference type="ChEBI" id="CHEBI:57453"/>
        <dbReference type="EC" id="2.1.2.11"/>
    </reaction>
</comment>
<comment type="cofactor">
    <cofactor evidence="1">
        <name>Mg(2+)</name>
        <dbReference type="ChEBI" id="CHEBI:18420"/>
    </cofactor>
    <text evidence="1">Binds 1 Mg(2+) ion per subunit.</text>
</comment>
<comment type="pathway">
    <text evidence="1">Cofactor biosynthesis; (R)-pantothenate biosynthesis; (R)-pantoate from 3-methyl-2-oxobutanoate: step 1/2.</text>
</comment>
<comment type="subunit">
    <text evidence="1">Homodecamer; pentamer of dimers.</text>
</comment>
<comment type="subcellular location">
    <subcellularLocation>
        <location evidence="1">Cytoplasm</location>
    </subcellularLocation>
</comment>
<comment type="similarity">
    <text evidence="1">Belongs to the PanB family.</text>
</comment>
<sequence length="264" mass="29313">MNKVTTKTLFEKKQKGEKITMITAYDYTFAKIFDSCSVDILLVGDSLGMVILGYDSTIPVTMDDMEHHVRAVSRGAKYSMVVADMPFLSYHTTIEEAVKNAGRLIRAGAYAVKMEGCDDVYDKIEAVIKAQIPVMGHLGLTPQSVNIFGGYDLRAKEEAEAKKLVEDAKKLEKAGVFAIVLEKVPSHVAKEVQRSLNVPVIGIGAGPYCDGQVLVCYDMLGMYEDFKPKFVKRYAEVGNMIKDAVTRYIEEVKKGEFPGKEHSY</sequence>
<organism>
    <name type="scientific">Caldicellulosiruptor bescii (strain ATCC BAA-1888 / DSM 6725 / KCTC 15123 / Z-1320)</name>
    <name type="common">Anaerocellum thermophilum</name>
    <dbReference type="NCBI Taxonomy" id="521460"/>
    <lineage>
        <taxon>Bacteria</taxon>
        <taxon>Bacillati</taxon>
        <taxon>Bacillota</taxon>
        <taxon>Bacillota incertae sedis</taxon>
        <taxon>Caldicellulosiruptorales</taxon>
        <taxon>Caldicellulosiruptoraceae</taxon>
        <taxon>Caldicellulosiruptor</taxon>
    </lineage>
</organism>
<gene>
    <name evidence="1" type="primary">panB</name>
    <name type="ordered locus">Athe_1981</name>
</gene>
<proteinExistence type="inferred from homology"/>
<feature type="chain" id="PRO_1000123367" description="3-methyl-2-oxobutanoate hydroxymethyltransferase">
    <location>
        <begin position="1"/>
        <end position="264"/>
    </location>
</feature>
<feature type="active site" description="Proton acceptor" evidence="1">
    <location>
        <position position="182"/>
    </location>
</feature>
<feature type="binding site" evidence="1">
    <location>
        <begin position="45"/>
        <end position="46"/>
    </location>
    <ligand>
        <name>3-methyl-2-oxobutanoate</name>
        <dbReference type="ChEBI" id="CHEBI:11851"/>
    </ligand>
</feature>
<feature type="binding site" evidence="1">
    <location>
        <position position="45"/>
    </location>
    <ligand>
        <name>Mg(2+)</name>
        <dbReference type="ChEBI" id="CHEBI:18420"/>
    </ligand>
</feature>
<feature type="binding site" evidence="1">
    <location>
        <position position="84"/>
    </location>
    <ligand>
        <name>3-methyl-2-oxobutanoate</name>
        <dbReference type="ChEBI" id="CHEBI:11851"/>
    </ligand>
</feature>
<feature type="binding site" evidence="1">
    <location>
        <position position="84"/>
    </location>
    <ligand>
        <name>Mg(2+)</name>
        <dbReference type="ChEBI" id="CHEBI:18420"/>
    </ligand>
</feature>
<feature type="binding site" evidence="1">
    <location>
        <position position="113"/>
    </location>
    <ligand>
        <name>3-methyl-2-oxobutanoate</name>
        <dbReference type="ChEBI" id="CHEBI:11851"/>
    </ligand>
</feature>
<feature type="binding site" evidence="1">
    <location>
        <position position="115"/>
    </location>
    <ligand>
        <name>Mg(2+)</name>
        <dbReference type="ChEBI" id="CHEBI:18420"/>
    </ligand>
</feature>
<name>PANB_CALBD</name>
<keyword id="KW-0963">Cytoplasm</keyword>
<keyword id="KW-0460">Magnesium</keyword>
<keyword id="KW-0479">Metal-binding</keyword>
<keyword id="KW-0566">Pantothenate biosynthesis</keyword>
<keyword id="KW-0808">Transferase</keyword>